<accession>Q2QLA1</accession>
<evidence type="ECO:0000250" key="1"/>
<evidence type="ECO:0000255" key="2">
    <source>
        <dbReference type="PROSITE-ProRule" id="PRU00125"/>
    </source>
</evidence>
<evidence type="ECO:0000255" key="3">
    <source>
        <dbReference type="PROSITE-ProRule" id="PRU00636"/>
    </source>
</evidence>
<evidence type="ECO:0000256" key="4">
    <source>
        <dbReference type="SAM" id="MobiDB-lite"/>
    </source>
</evidence>
<evidence type="ECO:0000305" key="5"/>
<dbReference type="EMBL" id="DP000021">
    <property type="protein sequence ID" value="ABB89808.1"/>
    <property type="molecule type" value="Genomic_DNA"/>
</dbReference>
<dbReference type="RefSeq" id="NP_001162161.1">
    <property type="nucleotide sequence ID" value="NM_001168690.1"/>
</dbReference>
<dbReference type="SMR" id="Q2QLA1"/>
<dbReference type="FunCoup" id="Q2QLA1">
    <property type="interactions" value="524"/>
</dbReference>
<dbReference type="STRING" id="13616.ENSMODP00000058291"/>
<dbReference type="Ensembl" id="ENSMODT00000020118.4">
    <property type="protein sequence ID" value="ENSMODP00000019764.3"/>
    <property type="gene ID" value="ENSMODG00000015840.4"/>
</dbReference>
<dbReference type="GeneID" id="780949"/>
<dbReference type="KEGG" id="mdo:780949"/>
<dbReference type="CTD" id="26136"/>
<dbReference type="eggNOG" id="KOG1704">
    <property type="taxonomic scope" value="Eukaryota"/>
</dbReference>
<dbReference type="GeneTree" id="ENSGT00940000155993"/>
<dbReference type="HOGENOM" id="CLU_008937_1_1_1"/>
<dbReference type="InParanoid" id="Q2QLA1"/>
<dbReference type="OrthoDB" id="10069167at2759"/>
<dbReference type="TreeFam" id="TF313265"/>
<dbReference type="Proteomes" id="UP000002280">
    <property type="component" value="Chromosome 8"/>
</dbReference>
<dbReference type="Bgee" id="ENSMODG00000015840">
    <property type="expression patterns" value="Expressed in forelimb bud and 19 other cell types or tissues"/>
</dbReference>
<dbReference type="GO" id="GO:0005737">
    <property type="term" value="C:cytoplasm"/>
    <property type="evidence" value="ECO:0000250"/>
    <property type="project" value="UniProtKB"/>
</dbReference>
<dbReference type="GO" id="GO:0005925">
    <property type="term" value="C:focal adhesion"/>
    <property type="evidence" value="ECO:0007669"/>
    <property type="project" value="UniProtKB-SubCell"/>
</dbReference>
<dbReference type="GO" id="GO:0008270">
    <property type="term" value="F:zinc ion binding"/>
    <property type="evidence" value="ECO:0000250"/>
    <property type="project" value="UniProtKB"/>
</dbReference>
<dbReference type="GO" id="GO:0008285">
    <property type="term" value="P:negative regulation of cell population proliferation"/>
    <property type="evidence" value="ECO:0000250"/>
    <property type="project" value="UniProtKB"/>
</dbReference>
<dbReference type="CDD" id="cd09413">
    <property type="entry name" value="LIM1_Testin"/>
    <property type="match status" value="1"/>
</dbReference>
<dbReference type="CDD" id="cd09416">
    <property type="entry name" value="LIM2_Testin"/>
    <property type="match status" value="1"/>
</dbReference>
<dbReference type="CDD" id="cd09419">
    <property type="entry name" value="LIM3_Testin"/>
    <property type="match status" value="1"/>
</dbReference>
<dbReference type="CDD" id="cd09829">
    <property type="entry name" value="PET_testin"/>
    <property type="match status" value="1"/>
</dbReference>
<dbReference type="FunFam" id="2.10.110.10:FF:000061">
    <property type="entry name" value="Testin"/>
    <property type="match status" value="1"/>
</dbReference>
<dbReference type="FunFam" id="2.10.110.10:FF:000065">
    <property type="entry name" value="Testin"/>
    <property type="match status" value="1"/>
</dbReference>
<dbReference type="FunFam" id="2.10.110.10:FF:000005">
    <property type="entry name" value="Testin isoform 1"/>
    <property type="match status" value="1"/>
</dbReference>
<dbReference type="Gene3D" id="2.10.110.10">
    <property type="entry name" value="Cysteine Rich Protein"/>
    <property type="match status" value="3"/>
</dbReference>
<dbReference type="InterPro" id="IPR034958">
    <property type="entry name" value="LIM1_Testin"/>
</dbReference>
<dbReference type="InterPro" id="IPR034959">
    <property type="entry name" value="LIM2_Testin"/>
</dbReference>
<dbReference type="InterPro" id="IPR034960">
    <property type="entry name" value="LIM3_Testin"/>
</dbReference>
<dbReference type="InterPro" id="IPR010442">
    <property type="entry name" value="PET_domain"/>
</dbReference>
<dbReference type="InterPro" id="IPR033724">
    <property type="entry name" value="PET_testin"/>
</dbReference>
<dbReference type="InterPro" id="IPR047120">
    <property type="entry name" value="Pk/Esn/Tes"/>
</dbReference>
<dbReference type="InterPro" id="IPR001781">
    <property type="entry name" value="Znf_LIM"/>
</dbReference>
<dbReference type="PANTHER" id="PTHR24211">
    <property type="entry name" value="LIM DOMAIN-CONTAINING PROTEIN"/>
    <property type="match status" value="1"/>
</dbReference>
<dbReference type="PANTHER" id="PTHR24211:SF1">
    <property type="entry name" value="TESTIN"/>
    <property type="match status" value="1"/>
</dbReference>
<dbReference type="Pfam" id="PF00412">
    <property type="entry name" value="LIM"/>
    <property type="match status" value="2"/>
</dbReference>
<dbReference type="Pfam" id="PF06297">
    <property type="entry name" value="PET"/>
    <property type="match status" value="1"/>
</dbReference>
<dbReference type="SMART" id="SM00132">
    <property type="entry name" value="LIM"/>
    <property type="match status" value="3"/>
</dbReference>
<dbReference type="SUPFAM" id="SSF57716">
    <property type="entry name" value="Glucocorticoid receptor-like (DNA-binding domain)"/>
    <property type="match status" value="2"/>
</dbReference>
<dbReference type="PROSITE" id="PS00478">
    <property type="entry name" value="LIM_DOMAIN_1"/>
    <property type="match status" value="2"/>
</dbReference>
<dbReference type="PROSITE" id="PS50023">
    <property type="entry name" value="LIM_DOMAIN_2"/>
    <property type="match status" value="3"/>
</dbReference>
<dbReference type="PROSITE" id="PS51303">
    <property type="entry name" value="PET"/>
    <property type="match status" value="1"/>
</dbReference>
<sequence length="422" mass="48251">MDLENKMKKMGLGHEQGFGAPCLKCKEKCEGFELHFWRKICRNCKCGQEEHDVFMSNEEDRKVGKLFEDTKYTTLIAKLKTDGIPMYKRNVMILTNPVPAKKNVSINTVTYEWAPPVQNQALARRYMQMLPRNKQPVAGSEGAQYRKKQLAKQLPAHDQDPSKCHELTPNEVKQMEQFVKKYKNEALGVGDVKLPSEMDVKPGDRSSLDGGDRGTTAEVGAVEDKSSADKKEDYSCYCCKQSMKEGDPAVYAERAGYDKFWHPACFICNTCSELLVDMIYFWKNGKLFCGRHYCDSEKPRCAGCDELIFSNEYTQAEDQNWHLKHFCCFDCDSILAGEIYVMVDNKPICKPCYVRNHAVICQGCHNAIDPEVQRVTYNNFNWHATEECFLCSCCSKCLIGQKFIPIEAMLFCSVECKKMMMS</sequence>
<reference key="1">
    <citation type="submission" date="2005-03" db="EMBL/GenBank/DDBJ databases">
        <title>NISC comparative sequencing initiative.</title>
        <authorList>
            <person name="Antonellis A."/>
            <person name="Ayele K."/>
            <person name="Benjamin B."/>
            <person name="Blakesley R.W."/>
            <person name="Boakye A."/>
            <person name="Bouffard G.G."/>
            <person name="Brinkley C."/>
            <person name="Brooks S."/>
            <person name="Chu G."/>
            <person name="Coleman H."/>
            <person name="Engle J."/>
            <person name="Gestole M."/>
            <person name="Greene A."/>
            <person name="Guan X."/>
            <person name="Gupta J."/>
            <person name="Haghighi P."/>
            <person name="Han J."/>
            <person name="Hansen N."/>
            <person name="Ho S.-L."/>
            <person name="Hu P."/>
            <person name="Hunter G."/>
            <person name="Hurle B."/>
            <person name="Idol J.R."/>
            <person name="Kwong P."/>
            <person name="Laric P."/>
            <person name="Larson S."/>
            <person name="Lee-Lin S.-Q."/>
            <person name="Legaspi R."/>
            <person name="Madden M."/>
            <person name="Maduro Q.L."/>
            <person name="Maduro V.B."/>
            <person name="Margulies E.H."/>
            <person name="Masiello C."/>
            <person name="Maskeri B."/>
            <person name="McDowell J."/>
            <person name="Mojidi H.A."/>
            <person name="Mullikin J.C."/>
            <person name="Oestreicher J.S."/>
            <person name="Park M."/>
            <person name="Portnoy M.E."/>
            <person name="Prasad A."/>
            <person name="Puri O."/>
            <person name="Reddix-Dugue N."/>
            <person name="Schandler K."/>
            <person name="Schueler M.G."/>
            <person name="Sison C."/>
            <person name="Stantripop S."/>
            <person name="Stephen E."/>
            <person name="Taye A."/>
            <person name="Thomas J.W."/>
            <person name="Thomas P.J."/>
            <person name="Tsipouri V."/>
            <person name="Ung L."/>
            <person name="Vogt J.L."/>
            <person name="Wetherby K.D."/>
            <person name="Young A."/>
            <person name="Green E.D."/>
        </authorList>
    </citation>
    <scope>NUCLEOTIDE SEQUENCE [LARGE SCALE GENOMIC DNA]</scope>
</reference>
<name>TES_MONDO</name>
<feature type="chain" id="PRO_0000226348" description="Testin">
    <location>
        <begin position="1"/>
        <end position="422"/>
    </location>
</feature>
<feature type="domain" description="PET" evidence="3">
    <location>
        <begin position="92"/>
        <end position="199"/>
    </location>
</feature>
<feature type="domain" description="LIM zinc-binding 1" evidence="2">
    <location>
        <begin position="234"/>
        <end position="297"/>
    </location>
</feature>
<feature type="domain" description="LIM zinc-binding 2" evidence="2">
    <location>
        <begin position="299"/>
        <end position="359"/>
    </location>
</feature>
<feature type="domain" description="LIM zinc-binding 3" evidence="2">
    <location>
        <begin position="362"/>
        <end position="422"/>
    </location>
</feature>
<feature type="region of interest" description="Disordered" evidence="4">
    <location>
        <begin position="135"/>
        <end position="162"/>
    </location>
</feature>
<feature type="region of interest" description="Disordered" evidence="4">
    <location>
        <begin position="194"/>
        <end position="226"/>
    </location>
</feature>
<feature type="compositionally biased region" description="Basic and acidic residues" evidence="4">
    <location>
        <begin position="194"/>
        <end position="212"/>
    </location>
</feature>
<comment type="function">
    <text evidence="1">Scaffold protein that may play a role in cell adhesion, cell spreading and in the reorganization of the actin cytoskeleton. Plays a role in the regulation of cell proliferation. May act as a tumor suppressor (By similarity).</text>
</comment>
<comment type="subunit">
    <text evidence="1">Interacts via LIM domain 1 with ZYX. Interacts (via LIM domain 3) with ENAH and VASP. Interacts with ALKBH4, talin, actin, alpha-actinin, GRIP1 and PXN (By similarity). Interacts (via LIM domain 2) with ACTL7A (via N-terminus). Heterodimer with ACTL7A; the heterodimer interacts with ENAH to form a heterotrimer (By similarity).</text>
</comment>
<comment type="subcellular location">
    <subcellularLocation>
        <location evidence="1">Cytoplasm</location>
    </subcellularLocation>
    <subcellularLocation>
        <location evidence="1">Cell junction</location>
        <location evidence="1">Focal adhesion</location>
    </subcellularLocation>
    <text evidence="1">Detected along actin stress fibers.</text>
</comment>
<comment type="domain">
    <text evidence="1">The N-terminal and the C-terminal halves of the protein can associate with each other, thereby hindering interactions with ZYX.</text>
</comment>
<comment type="similarity">
    <text evidence="5">Belongs to the prickle / espinas / testin family.</text>
</comment>
<proteinExistence type="inferred from homology"/>
<organism>
    <name type="scientific">Monodelphis domestica</name>
    <name type="common">Gray short-tailed opossum</name>
    <dbReference type="NCBI Taxonomy" id="13616"/>
    <lineage>
        <taxon>Eukaryota</taxon>
        <taxon>Metazoa</taxon>
        <taxon>Chordata</taxon>
        <taxon>Craniata</taxon>
        <taxon>Vertebrata</taxon>
        <taxon>Euteleostomi</taxon>
        <taxon>Mammalia</taxon>
        <taxon>Metatheria</taxon>
        <taxon>Didelphimorphia</taxon>
        <taxon>Didelphidae</taxon>
        <taxon>Monodelphis</taxon>
    </lineage>
</organism>
<keyword id="KW-0965">Cell junction</keyword>
<keyword id="KW-0963">Cytoplasm</keyword>
<keyword id="KW-0440">LIM domain</keyword>
<keyword id="KW-0479">Metal-binding</keyword>
<keyword id="KW-1185">Reference proteome</keyword>
<keyword id="KW-0677">Repeat</keyword>
<keyword id="KW-0862">Zinc</keyword>
<protein>
    <recommendedName>
        <fullName>Testin</fullName>
    </recommendedName>
</protein>
<gene>
    <name type="primary">TES</name>
</gene>